<evidence type="ECO:0000255" key="1">
    <source>
        <dbReference type="HAMAP-Rule" id="MF_01088"/>
    </source>
</evidence>
<sequence length="111" mass="12999">MINTVALFWALFIVCVVNMLRYYSSLRALLVVLRGCDPLLYQYVDGGGFFTSHGQPGKQLRLVRYIYERRYCDHHDGEFIRRCERLRRQFILTSALCGLVVVALIALMLWH</sequence>
<name>USPB_EDWI9</name>
<gene>
    <name evidence="1" type="primary">uspB</name>
    <name type="ordered locus">NT01EI_3728</name>
</gene>
<feature type="chain" id="PRO_1000213537" description="Universal stress protein B">
    <location>
        <begin position="1"/>
        <end position="111"/>
    </location>
</feature>
<feature type="transmembrane region" description="Helical" evidence="1">
    <location>
        <begin position="1"/>
        <end position="21"/>
    </location>
</feature>
<feature type="transmembrane region" description="Helical" evidence="1">
    <location>
        <begin position="90"/>
        <end position="110"/>
    </location>
</feature>
<keyword id="KW-0997">Cell inner membrane</keyword>
<keyword id="KW-1003">Cell membrane</keyword>
<keyword id="KW-0472">Membrane</keyword>
<keyword id="KW-0812">Transmembrane</keyword>
<keyword id="KW-1133">Transmembrane helix</keyword>
<reference key="1">
    <citation type="submission" date="2009-03" db="EMBL/GenBank/DDBJ databases">
        <title>Complete genome sequence of Edwardsiella ictaluri 93-146.</title>
        <authorList>
            <person name="Williams M.L."/>
            <person name="Gillaspy A.F."/>
            <person name="Dyer D.W."/>
            <person name="Thune R.L."/>
            <person name="Waldbieser G.C."/>
            <person name="Schuster S.C."/>
            <person name="Gipson J."/>
            <person name="Zaitshik J."/>
            <person name="Landry C."/>
            <person name="Lawrence M.L."/>
        </authorList>
    </citation>
    <scope>NUCLEOTIDE SEQUENCE [LARGE SCALE GENOMIC DNA]</scope>
    <source>
        <strain>93-146</strain>
    </source>
</reference>
<protein>
    <recommendedName>
        <fullName evidence="1">Universal stress protein B</fullName>
    </recommendedName>
</protein>
<dbReference type="EMBL" id="CP001600">
    <property type="protein sequence ID" value="ACR70855.1"/>
    <property type="molecule type" value="Genomic_DNA"/>
</dbReference>
<dbReference type="RefSeq" id="WP_015872893.1">
    <property type="nucleotide sequence ID" value="NZ_CP169062.1"/>
</dbReference>
<dbReference type="STRING" id="67780.B6E78_10245"/>
<dbReference type="GeneID" id="69540560"/>
<dbReference type="KEGG" id="eic:NT01EI_3728"/>
<dbReference type="PATRIC" id="fig|634503.3.peg.3328"/>
<dbReference type="HOGENOM" id="CLU_151816_0_0_6"/>
<dbReference type="OrthoDB" id="6432605at2"/>
<dbReference type="Proteomes" id="UP000001485">
    <property type="component" value="Chromosome"/>
</dbReference>
<dbReference type="GO" id="GO:0005886">
    <property type="term" value="C:plasma membrane"/>
    <property type="evidence" value="ECO:0007669"/>
    <property type="project" value="UniProtKB-SubCell"/>
</dbReference>
<dbReference type="HAMAP" id="MF_01088">
    <property type="entry name" value="UspB"/>
    <property type="match status" value="1"/>
</dbReference>
<dbReference type="InterPro" id="IPR019598">
    <property type="entry name" value="Universal_stress_protein_B"/>
</dbReference>
<dbReference type="NCBIfam" id="NF003435">
    <property type="entry name" value="PRK04960.1"/>
    <property type="match status" value="1"/>
</dbReference>
<dbReference type="Pfam" id="PF10625">
    <property type="entry name" value="UspB"/>
    <property type="match status" value="1"/>
</dbReference>
<comment type="subcellular location">
    <subcellularLocation>
        <location evidence="1">Cell inner membrane</location>
        <topology evidence="1">Multi-pass membrane protein</topology>
    </subcellularLocation>
</comment>
<comment type="similarity">
    <text evidence="1">Belongs to the universal stress protein B family.</text>
</comment>
<organism>
    <name type="scientific">Edwardsiella ictaluri (strain 93-146)</name>
    <dbReference type="NCBI Taxonomy" id="634503"/>
    <lineage>
        <taxon>Bacteria</taxon>
        <taxon>Pseudomonadati</taxon>
        <taxon>Pseudomonadota</taxon>
        <taxon>Gammaproteobacteria</taxon>
        <taxon>Enterobacterales</taxon>
        <taxon>Hafniaceae</taxon>
        <taxon>Edwardsiella</taxon>
    </lineage>
</organism>
<accession>C5BB13</accession>
<proteinExistence type="inferred from homology"/>